<keyword id="KW-1185">Reference proteome</keyword>
<keyword id="KW-0687">Ribonucleoprotein</keyword>
<keyword id="KW-0689">Ribosomal protein</keyword>
<feature type="chain" id="PRO_0000130428" description="Large ribosomal subunit protein uL29">
    <location>
        <begin position="1"/>
        <end position="64"/>
    </location>
</feature>
<accession>Q82X81</accession>
<protein>
    <recommendedName>
        <fullName evidence="1">Large ribosomal subunit protein uL29</fullName>
    </recommendedName>
    <alternativeName>
        <fullName evidence="2">50S ribosomal protein L29</fullName>
    </alternativeName>
</protein>
<proteinExistence type="inferred from homology"/>
<comment type="similarity">
    <text evidence="1">Belongs to the universal ribosomal protein uL29 family.</text>
</comment>
<name>RL29_NITEU</name>
<sequence length="64" mass="7524">MKVQELREKNLSELGKELLSLRRAQFGLRLQHRTQQLANVSQINKVRKDIARLKTIIREKTGQL</sequence>
<gene>
    <name evidence="1" type="primary">rpmC</name>
    <name type="ordered locus">NE0409</name>
</gene>
<organism>
    <name type="scientific">Nitrosomonas europaea (strain ATCC 19718 / CIP 103999 / KCTC 2705 / NBRC 14298)</name>
    <dbReference type="NCBI Taxonomy" id="228410"/>
    <lineage>
        <taxon>Bacteria</taxon>
        <taxon>Pseudomonadati</taxon>
        <taxon>Pseudomonadota</taxon>
        <taxon>Betaproteobacteria</taxon>
        <taxon>Nitrosomonadales</taxon>
        <taxon>Nitrosomonadaceae</taxon>
        <taxon>Nitrosomonas</taxon>
    </lineage>
</organism>
<dbReference type="EMBL" id="AL954747">
    <property type="protein sequence ID" value="CAD84320.1"/>
    <property type="molecule type" value="Genomic_DNA"/>
</dbReference>
<dbReference type="RefSeq" id="WP_011111044.1">
    <property type="nucleotide sequence ID" value="NC_004757.1"/>
</dbReference>
<dbReference type="SMR" id="Q82X81"/>
<dbReference type="STRING" id="228410.NE0409"/>
<dbReference type="GeneID" id="87103618"/>
<dbReference type="KEGG" id="neu:NE0409"/>
<dbReference type="eggNOG" id="COG0255">
    <property type="taxonomic scope" value="Bacteria"/>
</dbReference>
<dbReference type="HOGENOM" id="CLU_158491_1_1_4"/>
<dbReference type="OrthoDB" id="9815192at2"/>
<dbReference type="PhylomeDB" id="Q82X81"/>
<dbReference type="Proteomes" id="UP000001416">
    <property type="component" value="Chromosome"/>
</dbReference>
<dbReference type="GO" id="GO:0022625">
    <property type="term" value="C:cytosolic large ribosomal subunit"/>
    <property type="evidence" value="ECO:0007669"/>
    <property type="project" value="TreeGrafter"/>
</dbReference>
<dbReference type="GO" id="GO:0003735">
    <property type="term" value="F:structural constituent of ribosome"/>
    <property type="evidence" value="ECO:0007669"/>
    <property type="project" value="InterPro"/>
</dbReference>
<dbReference type="GO" id="GO:0006412">
    <property type="term" value="P:translation"/>
    <property type="evidence" value="ECO:0007669"/>
    <property type="project" value="UniProtKB-UniRule"/>
</dbReference>
<dbReference type="CDD" id="cd00427">
    <property type="entry name" value="Ribosomal_L29_HIP"/>
    <property type="match status" value="1"/>
</dbReference>
<dbReference type="FunFam" id="1.10.287.310:FF:000001">
    <property type="entry name" value="50S ribosomal protein L29"/>
    <property type="match status" value="1"/>
</dbReference>
<dbReference type="Gene3D" id="1.10.287.310">
    <property type="match status" value="1"/>
</dbReference>
<dbReference type="HAMAP" id="MF_00374">
    <property type="entry name" value="Ribosomal_uL29"/>
    <property type="match status" value="1"/>
</dbReference>
<dbReference type="InterPro" id="IPR050063">
    <property type="entry name" value="Ribosomal_protein_uL29"/>
</dbReference>
<dbReference type="InterPro" id="IPR001854">
    <property type="entry name" value="Ribosomal_uL29"/>
</dbReference>
<dbReference type="InterPro" id="IPR036049">
    <property type="entry name" value="Ribosomal_uL29_sf"/>
</dbReference>
<dbReference type="NCBIfam" id="TIGR00012">
    <property type="entry name" value="L29"/>
    <property type="match status" value="1"/>
</dbReference>
<dbReference type="PANTHER" id="PTHR10916">
    <property type="entry name" value="60S RIBOSOMAL PROTEIN L35/50S RIBOSOMAL PROTEIN L29"/>
    <property type="match status" value="1"/>
</dbReference>
<dbReference type="PANTHER" id="PTHR10916:SF0">
    <property type="entry name" value="LARGE RIBOSOMAL SUBUNIT PROTEIN UL29C"/>
    <property type="match status" value="1"/>
</dbReference>
<dbReference type="Pfam" id="PF00831">
    <property type="entry name" value="Ribosomal_L29"/>
    <property type="match status" value="1"/>
</dbReference>
<dbReference type="SUPFAM" id="SSF46561">
    <property type="entry name" value="Ribosomal protein L29 (L29p)"/>
    <property type="match status" value="1"/>
</dbReference>
<evidence type="ECO:0000255" key="1">
    <source>
        <dbReference type="HAMAP-Rule" id="MF_00374"/>
    </source>
</evidence>
<evidence type="ECO:0000305" key="2"/>
<reference key="1">
    <citation type="journal article" date="2003" name="J. Bacteriol.">
        <title>Complete genome sequence of the ammonia-oxidizing bacterium and obligate chemolithoautotroph Nitrosomonas europaea.</title>
        <authorList>
            <person name="Chain P."/>
            <person name="Lamerdin J.E."/>
            <person name="Larimer F.W."/>
            <person name="Regala W."/>
            <person name="Lao V."/>
            <person name="Land M.L."/>
            <person name="Hauser L."/>
            <person name="Hooper A.B."/>
            <person name="Klotz M.G."/>
            <person name="Norton J."/>
            <person name="Sayavedra-Soto L.A."/>
            <person name="Arciero D.M."/>
            <person name="Hommes N.G."/>
            <person name="Whittaker M.M."/>
            <person name="Arp D.J."/>
        </authorList>
    </citation>
    <scope>NUCLEOTIDE SEQUENCE [LARGE SCALE GENOMIC DNA]</scope>
    <source>
        <strain>ATCC 19718 / CIP 103999 / KCTC 2705 / NBRC 14298</strain>
    </source>
</reference>